<evidence type="ECO:0000250" key="1"/>
<evidence type="ECO:0000255" key="2"/>
<evidence type="ECO:0000305" key="3"/>
<reference key="1">
    <citation type="submission" date="2008-02" db="EMBL/GenBank/DDBJ databases">
        <title>Complete sequence of Yersinia pseudotuberculosis YPIII.</title>
        <authorList>
            <consortium name="US DOE Joint Genome Institute"/>
            <person name="Copeland A."/>
            <person name="Lucas S."/>
            <person name="Lapidus A."/>
            <person name="Glavina del Rio T."/>
            <person name="Dalin E."/>
            <person name="Tice H."/>
            <person name="Bruce D."/>
            <person name="Goodwin L."/>
            <person name="Pitluck S."/>
            <person name="Munk A.C."/>
            <person name="Brettin T."/>
            <person name="Detter J.C."/>
            <person name="Han C."/>
            <person name="Tapia R."/>
            <person name="Schmutz J."/>
            <person name="Larimer F."/>
            <person name="Land M."/>
            <person name="Hauser L."/>
            <person name="Challacombe J.F."/>
            <person name="Green L."/>
            <person name="Lindler L.E."/>
            <person name="Nikolich M.P."/>
            <person name="Richardson P."/>
        </authorList>
    </citation>
    <scope>NUCLEOTIDE SEQUENCE [LARGE SCALE GENOMIC DNA]</scope>
    <source>
        <strain>YPIII</strain>
    </source>
</reference>
<keyword id="KW-0997">Cell inner membrane</keyword>
<keyword id="KW-1003">Cell membrane</keyword>
<keyword id="KW-0472">Membrane</keyword>
<keyword id="KW-0812">Transmembrane</keyword>
<keyword id="KW-1133">Transmembrane helix</keyword>
<keyword id="KW-0813">Transport</keyword>
<name>LSRC_YERPY</name>
<organism>
    <name type="scientific">Yersinia pseudotuberculosis serotype O:3 (strain YPIII)</name>
    <dbReference type="NCBI Taxonomy" id="502800"/>
    <lineage>
        <taxon>Bacteria</taxon>
        <taxon>Pseudomonadati</taxon>
        <taxon>Pseudomonadota</taxon>
        <taxon>Gammaproteobacteria</taxon>
        <taxon>Enterobacterales</taxon>
        <taxon>Yersiniaceae</taxon>
        <taxon>Yersinia</taxon>
    </lineage>
</organism>
<protein>
    <recommendedName>
        <fullName>Autoinducer 2 import system permease protein LsrC</fullName>
        <shortName>AI-2 import system permease protein LsrC</shortName>
    </recommendedName>
</protein>
<dbReference type="EMBL" id="CP000950">
    <property type="protein sequence ID" value="ACA69918.1"/>
    <property type="molecule type" value="Genomic_DNA"/>
</dbReference>
<dbReference type="RefSeq" id="WP_012304623.1">
    <property type="nucleotide sequence ID" value="NZ_CP009792.1"/>
</dbReference>
<dbReference type="GeneID" id="49787446"/>
<dbReference type="KEGG" id="ypy:YPK_3651"/>
<dbReference type="PATRIC" id="fig|502800.11.peg.4406"/>
<dbReference type="GO" id="GO:0005886">
    <property type="term" value="C:plasma membrane"/>
    <property type="evidence" value="ECO:0007669"/>
    <property type="project" value="UniProtKB-SubCell"/>
</dbReference>
<dbReference type="GO" id="GO:0022857">
    <property type="term" value="F:transmembrane transporter activity"/>
    <property type="evidence" value="ECO:0007669"/>
    <property type="project" value="InterPro"/>
</dbReference>
<dbReference type="CDD" id="cd06579">
    <property type="entry name" value="TM_PBP1_transp_AraH_like"/>
    <property type="match status" value="1"/>
</dbReference>
<dbReference type="InterPro" id="IPR001851">
    <property type="entry name" value="ABC_transp_permease"/>
</dbReference>
<dbReference type="NCBIfam" id="NF011961">
    <property type="entry name" value="PRK15432.1"/>
    <property type="match status" value="1"/>
</dbReference>
<dbReference type="PANTHER" id="PTHR32196">
    <property type="entry name" value="ABC TRANSPORTER PERMEASE PROTEIN YPHD-RELATED-RELATED"/>
    <property type="match status" value="1"/>
</dbReference>
<dbReference type="PANTHER" id="PTHR32196:SF29">
    <property type="entry name" value="AUTOINDUCER 2 IMPORT SYSTEM PERMEASE PROTEIN LSRC"/>
    <property type="match status" value="1"/>
</dbReference>
<dbReference type="Pfam" id="PF02653">
    <property type="entry name" value="BPD_transp_2"/>
    <property type="match status" value="1"/>
</dbReference>
<comment type="function">
    <text evidence="1">Part of the ABC transporter complex LsrABCD involved in autoinducer 2 (AI-2) import. Probably responsible for the translocation of the substrate across the membrane (By similarity).</text>
</comment>
<comment type="subunit">
    <text evidence="1">The complex is composed of two ATP-binding proteins (LsrA), two transmembrane proteins (LsrC and LsrD) and a solute-binding protein (LsrB).</text>
</comment>
<comment type="subcellular location">
    <subcellularLocation>
        <location evidence="1">Cell inner membrane</location>
        <topology evidence="1">Multi-pass membrane protein</topology>
    </subcellularLocation>
</comment>
<comment type="similarity">
    <text evidence="3">Belongs to the binding-protein-dependent transport system permease family. AraH/RbsC subfamily.</text>
</comment>
<accession>B1JLQ1</accession>
<sequence>MLKFIQNNREGTALLAILTLFALLGIIDRNYFSLQTFTMIFSSAQILILLAIGATLVMLTRNIDVSVGSITGLCAVTVGMALNAGFGLVASCLFALLVGMVAGFFNGILVTWLRIPAIVATLGTLGLYRGLMLLLTGGKWIEGLPADLKSLSTPILFSISPIGWLTMLLILAMAWLLGNTAFGRSFYATGDNLQGARQLGVRTDSIRIFAFSMNGVMAALAGIVFASQIGFIPNQTGNGLEMKAIAACVLGGISLLGGTGTIIGAILGAFLLTQIDSVLVLLRLPAWWNDFIAGLVLLGVLVFDGRLRCAVERNIRQQKYARFTAQAIISDKKPTVSDNNPAASNKKKAAL</sequence>
<proteinExistence type="inferred from homology"/>
<gene>
    <name type="primary">lsrC</name>
    <name type="ordered locus">YPK_3651</name>
</gene>
<feature type="chain" id="PRO_0000351362" description="Autoinducer 2 import system permease protein LsrC">
    <location>
        <begin position="1"/>
        <end position="351"/>
    </location>
</feature>
<feature type="transmembrane region" description="Helical" evidence="2">
    <location>
        <begin position="14"/>
        <end position="34"/>
    </location>
</feature>
<feature type="transmembrane region" description="Helical" evidence="2">
    <location>
        <begin position="39"/>
        <end position="59"/>
    </location>
</feature>
<feature type="transmembrane region" description="Helical" evidence="2">
    <location>
        <begin position="70"/>
        <end position="90"/>
    </location>
</feature>
<feature type="transmembrane region" description="Helical" evidence="2">
    <location>
        <begin position="93"/>
        <end position="113"/>
    </location>
</feature>
<feature type="transmembrane region" description="Helical" evidence="2">
    <location>
        <begin position="115"/>
        <end position="135"/>
    </location>
</feature>
<feature type="transmembrane region" description="Helical" evidence="2">
    <location>
        <begin position="155"/>
        <end position="175"/>
    </location>
</feature>
<feature type="transmembrane region" description="Helical" evidence="2">
    <location>
        <begin position="213"/>
        <end position="233"/>
    </location>
</feature>
<feature type="transmembrane region" description="Helical" evidence="2">
    <location>
        <begin position="252"/>
        <end position="272"/>
    </location>
</feature>
<feature type="transmembrane region" description="Helical" evidence="2">
    <location>
        <begin position="284"/>
        <end position="304"/>
    </location>
</feature>